<keyword id="KW-0002">3D-structure</keyword>
<keyword id="KW-0208">D-amino acid</keyword>
<keyword id="KW-0903">Direct protein sequencing</keyword>
<keyword id="KW-1015">Disulfide bond</keyword>
<keyword id="KW-1185">Reference proteome</keyword>
<keyword id="KW-0964">Secreted</keyword>
<keyword id="KW-0732">Signal</keyword>
<keyword id="KW-0800">Toxin</keyword>
<organism>
    <name type="scientific">Ornithorhynchus anatinus</name>
    <name type="common">Duckbill platypus</name>
    <dbReference type="NCBI Taxonomy" id="9258"/>
    <lineage>
        <taxon>Eukaryota</taxon>
        <taxon>Metazoa</taxon>
        <taxon>Chordata</taxon>
        <taxon>Craniata</taxon>
        <taxon>Vertebrata</taxon>
        <taxon>Euteleostomi</taxon>
        <taxon>Mammalia</taxon>
        <taxon>Monotremata</taxon>
        <taxon>Ornithorhynchidae</taxon>
        <taxon>Ornithorhynchus</taxon>
    </lineage>
</organism>
<reference key="1">
    <citation type="journal article" date="2008" name="Toxicon">
        <title>Expression patterns of platypus defensin and related venom genes across a range of tissue types reveal the possibility of broader functions for OvDLPs than previously suspected.</title>
        <authorList>
            <person name="Whittington C.M."/>
            <person name="Papenfuss A.T."/>
            <person name="Kuchel P.W."/>
            <person name="Belov K."/>
        </authorList>
    </citation>
    <scope>NUCLEOTIDE SEQUENCE [MRNA]</scope>
    <scope>TISSUE SPECIFICITY</scope>
</reference>
<reference key="2">
    <citation type="journal article" date="1999" name="Biochem. J.">
        <title>Solution structure of a defensin-like peptide from platypus venom.</title>
        <authorList>
            <person name="Torres A.M."/>
            <person name="Wang X."/>
            <person name="Fletcher J.I."/>
            <person name="Alewood D."/>
            <person name="Alewood P.F."/>
            <person name="Smith R."/>
            <person name="Simpson R.J."/>
            <person name="Nicholson G.M."/>
            <person name="Sutherland S.K."/>
            <person name="Gallagher C.H."/>
            <person name="King G.F."/>
            <person name="Kuchel P.W."/>
        </authorList>
    </citation>
    <scope>PROTEIN SEQUENCE OF 25-66</scope>
    <scope>FUNCTION</scope>
    <scope>SUBCELLULAR LOCATION</scope>
    <scope>TISSUE SPECIFICITY</scope>
    <scope>STRUCTURE BY NMR OF 25-66</scope>
    <scope>DISULFIDE BOND</scope>
    <source>
        <tissue>Venom</tissue>
        <tissue>Venom gland</tissue>
    </source>
</reference>
<reference key="3">
    <citation type="journal article" date="2000" name="Biochem. J.">
        <title>Defensin-like peptide-2 from platypus venom: member of a class of peptides with a distinct structural fold.</title>
        <authorList>
            <person name="Torres A.M."/>
            <person name="de Plater G.M."/>
            <person name="Doverskog M."/>
            <person name="Birinyi-Strachan L.C."/>
            <person name="Nicholson G.M."/>
            <person name="Gallagher C.H."/>
            <person name="Kuchel P.W."/>
        </authorList>
    </citation>
    <scope>PROTEIN SEQUENCE OF 25-66</scope>
    <scope>STRUCTURE BY NMR OF 25-66</scope>
    <scope>DISULFIDE BOND</scope>
    <source>
        <tissue>Venom</tissue>
    </source>
</reference>
<reference key="4">
    <citation type="journal article" date="2005" name="Biochem. J.">
        <title>D-amino acid residue in a defensin-like peptide from platypus venom: effect on structure and chromatographic properties.</title>
        <authorList>
            <person name="Torres A.M."/>
            <person name="Tsampazi C."/>
            <person name="Geraghty D.P."/>
            <person name="Bansal P.S."/>
            <person name="Alewood P.F."/>
            <person name="Kuchel P.W."/>
        </authorList>
    </citation>
    <scope>D-AMINO ACID AT MET-26</scope>
    <scope>TISSUE SPECIFICITY</scope>
    <scope>STRUCTURE BY NMR OF 25-66</scope>
    <scope>DISULFIDE BOND</scope>
</reference>
<accession>P82140</accession>
<feature type="signal peptide" evidence="1">
    <location>
        <begin position="1"/>
        <end position="22"/>
    </location>
</feature>
<feature type="propeptide" id="PRO_0000352673" evidence="2 3">
    <location>
        <begin position="23"/>
        <end position="24"/>
    </location>
</feature>
<feature type="chain" id="PRO_0000079933" description="Defensin-like peptide 2/4" evidence="2 3">
    <location>
        <begin position="25"/>
        <end position="66"/>
    </location>
</feature>
<feature type="modified residue" description="D-methionine; in form DLP-2" evidence="4">
    <location>
        <position position="26"/>
    </location>
</feature>
<feature type="disulfide bond" evidence="2 3 4 8 9 10">
    <location>
        <begin position="33"/>
        <end position="63"/>
    </location>
</feature>
<feature type="disulfide bond" evidence="2 3 4 8 9 10">
    <location>
        <begin position="40"/>
        <end position="56"/>
    </location>
</feature>
<feature type="disulfide bond" evidence="2 3 4 8 9 10">
    <location>
        <begin position="48"/>
        <end position="64"/>
    </location>
</feature>
<feature type="strand" evidence="12">
    <location>
        <begin position="30"/>
        <end position="32"/>
    </location>
</feature>
<feature type="helix" evidence="11">
    <location>
        <begin position="33"/>
        <end position="36"/>
    </location>
</feature>
<feature type="strand" evidence="11">
    <location>
        <begin position="39"/>
        <end position="42"/>
    </location>
</feature>
<feature type="strand" evidence="12">
    <location>
        <begin position="53"/>
        <end position="55"/>
    </location>
</feature>
<feature type="strand" evidence="11">
    <location>
        <begin position="61"/>
        <end position="64"/>
    </location>
</feature>
<evidence type="ECO:0000255" key="1"/>
<evidence type="ECO:0000269" key="2">
    <source>
    </source>
</evidence>
<evidence type="ECO:0000269" key="3">
    <source>
    </source>
</evidence>
<evidence type="ECO:0000269" key="4">
    <source>
    </source>
</evidence>
<evidence type="ECO:0000269" key="5">
    <source>
    </source>
</evidence>
<evidence type="ECO:0000303" key="6">
    <source>
    </source>
</evidence>
<evidence type="ECO:0000303" key="7">
    <source>
    </source>
</evidence>
<evidence type="ECO:0000312" key="8">
    <source>
        <dbReference type="PDB" id="1D6B"/>
    </source>
</evidence>
<evidence type="ECO:0000312" key="9">
    <source>
        <dbReference type="PDB" id="1ZUE"/>
    </source>
</evidence>
<evidence type="ECO:0000312" key="10">
    <source>
        <dbReference type="PDB" id="1ZUF"/>
    </source>
</evidence>
<evidence type="ECO:0007829" key="11">
    <source>
        <dbReference type="PDB" id="1D6B"/>
    </source>
</evidence>
<evidence type="ECO:0007829" key="12">
    <source>
        <dbReference type="PDB" id="1ZUF"/>
    </source>
</evidence>
<protein>
    <recommendedName>
        <fullName evidence="6">Defensin-like peptide 2/4</fullName>
        <shortName evidence="6">DLP-2/DLP-4</shortName>
    </recommendedName>
    <alternativeName>
        <fullName evidence="7">Ornithorhynchus venom defensin-like peptide B</fullName>
        <shortName evidence="7">OvDLP-B</shortName>
    </alternativeName>
</protein>
<sequence length="66" mass="7599">MRLAYLLLLLVAVLFQAGGGSAKPIMFFEMQACWSHSGVCRDKSERNCKPMAWTYCENRNQKCCEY</sequence>
<dbReference type="PDB" id="1D6B">
    <property type="method" value="NMR"/>
    <property type="chains" value="A=25-66"/>
</dbReference>
<dbReference type="PDB" id="1ZUE">
    <property type="method" value="NMR"/>
    <property type="chains" value="A=25-66"/>
</dbReference>
<dbReference type="PDB" id="1ZUF">
    <property type="method" value="NMR"/>
    <property type="chains" value="A=25-66"/>
</dbReference>
<dbReference type="PDBsum" id="1D6B"/>
<dbReference type="PDBsum" id="1ZUE"/>
<dbReference type="PDBsum" id="1ZUF"/>
<dbReference type="SMR" id="P82140"/>
<dbReference type="Ensembl" id="ENSOANT00000002832.3">
    <property type="protein sequence ID" value="ENSOANP00000002831.2"/>
    <property type="gene ID" value="ENSOANG00000001780.3"/>
</dbReference>
<dbReference type="HOGENOM" id="CLU_2830578_0_0_1"/>
<dbReference type="InParanoid" id="P82140"/>
<dbReference type="EvolutionaryTrace" id="P82140"/>
<dbReference type="Proteomes" id="UP000002279">
    <property type="component" value="Chromosome X2"/>
</dbReference>
<dbReference type="Bgee" id="ENSOANG00000001780">
    <property type="expression patterns" value="Expressed in testis and 4 other cell types or tissues"/>
</dbReference>
<dbReference type="GO" id="GO:0005576">
    <property type="term" value="C:extracellular region"/>
    <property type="evidence" value="ECO:0000314"/>
    <property type="project" value="UniProtKB"/>
</dbReference>
<dbReference type="GO" id="GO:0090729">
    <property type="term" value="F:toxin activity"/>
    <property type="evidence" value="ECO:0007669"/>
    <property type="project" value="UniProtKB-KW"/>
</dbReference>
<dbReference type="FunFam" id="2.20.20.10:FF:000003">
    <property type="entry name" value="Defensin-like peptide 2/4"/>
    <property type="match status" value="1"/>
</dbReference>
<dbReference type="Gene3D" id="2.20.20.10">
    <property type="entry name" value="Anthopleurin-A"/>
    <property type="match status" value="1"/>
</dbReference>
<dbReference type="InterPro" id="IPR012553">
    <property type="entry name" value="Defensin_3"/>
</dbReference>
<dbReference type="InterPro" id="IPR023355">
    <property type="entry name" value="Myo_ane_neurotoxin_sf"/>
</dbReference>
<dbReference type="Pfam" id="PF08131">
    <property type="entry name" value="Defensin_3"/>
    <property type="match status" value="1"/>
</dbReference>
<dbReference type="SUPFAM" id="SSF57392">
    <property type="entry name" value="Defensin-like"/>
    <property type="match status" value="1"/>
</dbReference>
<comment type="function">
    <text evidence="2">Does not show antimicrobial, myotoxic, hemolytic and cell-promoting activities.</text>
</comment>
<comment type="subcellular location">
    <subcellularLocation>
        <location evidence="2">Secreted</location>
    </subcellularLocation>
</comment>
<comment type="tissue specificity">
    <text evidence="2 4 5">Produced by the crural gland and detected in venom from the spur located on each male hind leg. Is also widely expressed in both male and female tissues, including brain, intestine, kidney, lung, spleen and testis.</text>
</comment>
<comment type="PTM">
    <text evidence="4">Stereoinversion of L-Met-26 (in DLP-4) to D-Met-26 (in DLP-2).</text>
</comment>
<comment type="online information" name="Platypus resources">
    <link uri="https://www.twinkl.ch/search?q=platypus"/>
</comment>
<comment type="online information" name="Protein Spotlight">
    <link uri="https://www.proteinspotlight.org/back_issues/029"/>
    <text>Platypus poison - Issue 29 of December 2002</text>
</comment>
<name>DLP2_ORNAN</name>
<proteinExistence type="evidence at protein level"/>